<sequence>MQETSIKRAGASAAASAAPAATVPATASASARKLYIRTFGCQMNEYDSDKMADVLRGDQGLELTDNPEDADVILFNTCSVREKAQEKVFSDLGRVQHLKKLNPDLVIGVGGCVASQEGEAIVKRAPYVDVVFGPQTLHRLPELIRRRRASGASQVDISFPEIEKFDALPPPRIEGATAFVSIMEGCSKYCSFCVVPYTRGEEVSRPFDDVLVEVADLADQGVKEVTLLGQNVNAYRGPMGDTGEIADFATLLEYVHEIPGIERIRYTTSHPKEMTQRMVDAYANLPKLVSFLHLPVQAGSDRVLAAMKRGYTTLEFKSVVRRLRAARPGLTLSSDFIVGFPGETEEDFDKTMKLIEDVGFDTSFSFIYSRRPGTPAADLVDDTPQEVKLRRLQQLQALINAQAAAIAQAMVGTRQRLLVEGPSRRDPNELMGRTENNRIVNFPAPARLIGQMVDVIITDAYPNSLRARVADVDGLAQGNA</sequence>
<reference key="1">
    <citation type="journal article" date="2008" name="BMC Genomics">
        <title>The missing link: Bordetella petrii is endowed with both the metabolic versatility of environmental bacteria and virulence traits of pathogenic Bordetellae.</title>
        <authorList>
            <person name="Gross R."/>
            <person name="Guzman C.A."/>
            <person name="Sebaihia M."/>
            <person name="Martin dos Santos V.A.P."/>
            <person name="Pieper D.H."/>
            <person name="Koebnik R."/>
            <person name="Lechner M."/>
            <person name="Bartels D."/>
            <person name="Buhrmester J."/>
            <person name="Choudhuri J.V."/>
            <person name="Ebensen T."/>
            <person name="Gaigalat L."/>
            <person name="Herrmann S."/>
            <person name="Khachane A.N."/>
            <person name="Larisch C."/>
            <person name="Link S."/>
            <person name="Linke B."/>
            <person name="Meyer F."/>
            <person name="Mormann S."/>
            <person name="Nakunst D."/>
            <person name="Rueckert C."/>
            <person name="Schneiker-Bekel S."/>
            <person name="Schulze K."/>
            <person name="Voerholter F.-J."/>
            <person name="Yevsa T."/>
            <person name="Engle J.T."/>
            <person name="Goldman W.E."/>
            <person name="Puehler A."/>
            <person name="Goebel U.B."/>
            <person name="Goesmann A."/>
            <person name="Bloecker H."/>
            <person name="Kaiser O."/>
            <person name="Martinez-Arias R."/>
        </authorList>
    </citation>
    <scope>NUCLEOTIDE SEQUENCE [LARGE SCALE GENOMIC DNA]</scope>
    <source>
        <strain>ATCC BAA-461 / DSM 12804 / CCUG 43448</strain>
    </source>
</reference>
<keyword id="KW-0004">4Fe-4S</keyword>
<keyword id="KW-0963">Cytoplasm</keyword>
<keyword id="KW-0408">Iron</keyword>
<keyword id="KW-0411">Iron-sulfur</keyword>
<keyword id="KW-0479">Metal-binding</keyword>
<keyword id="KW-0949">S-adenosyl-L-methionine</keyword>
<keyword id="KW-0808">Transferase</keyword>
<keyword id="KW-0819">tRNA processing</keyword>
<name>MIAB_BORPD</name>
<feature type="chain" id="PRO_0000374159" description="tRNA-2-methylthio-N(6)-dimethylallyladenosine synthase">
    <location>
        <begin position="1"/>
        <end position="480"/>
    </location>
</feature>
<feature type="domain" description="MTTase N-terminal" evidence="1">
    <location>
        <begin position="32"/>
        <end position="149"/>
    </location>
</feature>
<feature type="domain" description="Radical SAM core" evidence="2">
    <location>
        <begin position="172"/>
        <end position="405"/>
    </location>
</feature>
<feature type="domain" description="TRAM" evidence="1">
    <location>
        <begin position="408"/>
        <end position="471"/>
    </location>
</feature>
<feature type="binding site" evidence="1">
    <location>
        <position position="41"/>
    </location>
    <ligand>
        <name>[4Fe-4S] cluster</name>
        <dbReference type="ChEBI" id="CHEBI:49883"/>
        <label>1</label>
    </ligand>
</feature>
<feature type="binding site" evidence="1">
    <location>
        <position position="78"/>
    </location>
    <ligand>
        <name>[4Fe-4S] cluster</name>
        <dbReference type="ChEBI" id="CHEBI:49883"/>
        <label>1</label>
    </ligand>
</feature>
<feature type="binding site" evidence="1">
    <location>
        <position position="112"/>
    </location>
    <ligand>
        <name>[4Fe-4S] cluster</name>
        <dbReference type="ChEBI" id="CHEBI:49883"/>
        <label>1</label>
    </ligand>
</feature>
<feature type="binding site" evidence="1">
    <location>
        <position position="186"/>
    </location>
    <ligand>
        <name>[4Fe-4S] cluster</name>
        <dbReference type="ChEBI" id="CHEBI:49883"/>
        <label>2</label>
        <note>4Fe-4S-S-AdoMet</note>
    </ligand>
</feature>
<feature type="binding site" evidence="1">
    <location>
        <position position="190"/>
    </location>
    <ligand>
        <name>[4Fe-4S] cluster</name>
        <dbReference type="ChEBI" id="CHEBI:49883"/>
        <label>2</label>
        <note>4Fe-4S-S-AdoMet</note>
    </ligand>
</feature>
<feature type="binding site" evidence="1">
    <location>
        <position position="193"/>
    </location>
    <ligand>
        <name>[4Fe-4S] cluster</name>
        <dbReference type="ChEBI" id="CHEBI:49883"/>
        <label>2</label>
        <note>4Fe-4S-S-AdoMet</note>
    </ligand>
</feature>
<evidence type="ECO:0000255" key="1">
    <source>
        <dbReference type="HAMAP-Rule" id="MF_01864"/>
    </source>
</evidence>
<evidence type="ECO:0000255" key="2">
    <source>
        <dbReference type="PROSITE-ProRule" id="PRU01266"/>
    </source>
</evidence>
<evidence type="ECO:0000305" key="3"/>
<dbReference type="EC" id="2.8.4.3" evidence="1"/>
<dbReference type="EMBL" id="AM902716">
    <property type="protein sequence ID" value="CAP43997.1"/>
    <property type="status" value="ALT_INIT"/>
    <property type="molecule type" value="Genomic_DNA"/>
</dbReference>
<dbReference type="SMR" id="A9HZZ2"/>
<dbReference type="STRING" id="94624.Bpet3654"/>
<dbReference type="KEGG" id="bpt:Bpet3654"/>
<dbReference type="eggNOG" id="COG0621">
    <property type="taxonomic scope" value="Bacteria"/>
</dbReference>
<dbReference type="Proteomes" id="UP000001225">
    <property type="component" value="Chromosome"/>
</dbReference>
<dbReference type="GO" id="GO:0005829">
    <property type="term" value="C:cytosol"/>
    <property type="evidence" value="ECO:0007669"/>
    <property type="project" value="TreeGrafter"/>
</dbReference>
<dbReference type="GO" id="GO:0051539">
    <property type="term" value="F:4 iron, 4 sulfur cluster binding"/>
    <property type="evidence" value="ECO:0007669"/>
    <property type="project" value="UniProtKB-UniRule"/>
</dbReference>
<dbReference type="GO" id="GO:0046872">
    <property type="term" value="F:metal ion binding"/>
    <property type="evidence" value="ECO:0007669"/>
    <property type="project" value="UniProtKB-KW"/>
</dbReference>
<dbReference type="GO" id="GO:0035597">
    <property type="term" value="F:N6-isopentenyladenosine methylthiotransferase activity"/>
    <property type="evidence" value="ECO:0007669"/>
    <property type="project" value="TreeGrafter"/>
</dbReference>
<dbReference type="CDD" id="cd01335">
    <property type="entry name" value="Radical_SAM"/>
    <property type="match status" value="1"/>
</dbReference>
<dbReference type="FunFam" id="3.40.50.12160:FF:000001">
    <property type="entry name" value="tRNA-2-methylthio-N(6)-dimethylallyladenosine synthase"/>
    <property type="match status" value="1"/>
</dbReference>
<dbReference type="FunFam" id="3.80.30.20:FF:000001">
    <property type="entry name" value="tRNA-2-methylthio-N(6)-dimethylallyladenosine synthase 2"/>
    <property type="match status" value="1"/>
</dbReference>
<dbReference type="Gene3D" id="3.40.50.12160">
    <property type="entry name" value="Methylthiotransferase, N-terminal domain"/>
    <property type="match status" value="1"/>
</dbReference>
<dbReference type="Gene3D" id="3.80.30.20">
    <property type="entry name" value="tm_1862 like domain"/>
    <property type="match status" value="1"/>
</dbReference>
<dbReference type="HAMAP" id="MF_01864">
    <property type="entry name" value="tRNA_metthiotr_MiaB"/>
    <property type="match status" value="1"/>
</dbReference>
<dbReference type="InterPro" id="IPR006638">
    <property type="entry name" value="Elp3/MiaA/NifB-like_rSAM"/>
</dbReference>
<dbReference type="InterPro" id="IPR005839">
    <property type="entry name" value="Methylthiotransferase"/>
</dbReference>
<dbReference type="InterPro" id="IPR020612">
    <property type="entry name" value="Methylthiotransferase_CS"/>
</dbReference>
<dbReference type="InterPro" id="IPR013848">
    <property type="entry name" value="Methylthiotransferase_N"/>
</dbReference>
<dbReference type="InterPro" id="IPR038135">
    <property type="entry name" value="Methylthiotransferase_N_sf"/>
</dbReference>
<dbReference type="InterPro" id="IPR006463">
    <property type="entry name" value="MiaB_methiolase"/>
</dbReference>
<dbReference type="InterPro" id="IPR007197">
    <property type="entry name" value="rSAM"/>
</dbReference>
<dbReference type="InterPro" id="IPR023404">
    <property type="entry name" value="rSAM_horseshoe"/>
</dbReference>
<dbReference type="InterPro" id="IPR002792">
    <property type="entry name" value="TRAM_dom"/>
</dbReference>
<dbReference type="NCBIfam" id="TIGR01574">
    <property type="entry name" value="miaB-methiolase"/>
    <property type="match status" value="1"/>
</dbReference>
<dbReference type="NCBIfam" id="TIGR00089">
    <property type="entry name" value="MiaB/RimO family radical SAM methylthiotransferase"/>
    <property type="match status" value="1"/>
</dbReference>
<dbReference type="PANTHER" id="PTHR43020">
    <property type="entry name" value="CDK5 REGULATORY SUBUNIT-ASSOCIATED PROTEIN 1"/>
    <property type="match status" value="1"/>
</dbReference>
<dbReference type="PANTHER" id="PTHR43020:SF2">
    <property type="entry name" value="MITOCHONDRIAL TRNA METHYLTHIOTRANSFERASE CDK5RAP1"/>
    <property type="match status" value="1"/>
</dbReference>
<dbReference type="Pfam" id="PF04055">
    <property type="entry name" value="Radical_SAM"/>
    <property type="match status" value="1"/>
</dbReference>
<dbReference type="Pfam" id="PF01938">
    <property type="entry name" value="TRAM"/>
    <property type="match status" value="1"/>
</dbReference>
<dbReference type="Pfam" id="PF00919">
    <property type="entry name" value="UPF0004"/>
    <property type="match status" value="1"/>
</dbReference>
<dbReference type="SFLD" id="SFLDF00273">
    <property type="entry name" value="(dimethylallyl)adenosine_tRNA"/>
    <property type="match status" value="1"/>
</dbReference>
<dbReference type="SFLD" id="SFLDG01082">
    <property type="entry name" value="B12-binding_domain_containing"/>
    <property type="match status" value="1"/>
</dbReference>
<dbReference type="SFLD" id="SFLDG01061">
    <property type="entry name" value="methylthiotransferase"/>
    <property type="match status" value="1"/>
</dbReference>
<dbReference type="SMART" id="SM00729">
    <property type="entry name" value="Elp3"/>
    <property type="match status" value="1"/>
</dbReference>
<dbReference type="SUPFAM" id="SSF102114">
    <property type="entry name" value="Radical SAM enzymes"/>
    <property type="match status" value="1"/>
</dbReference>
<dbReference type="PROSITE" id="PS51449">
    <property type="entry name" value="MTTASE_N"/>
    <property type="match status" value="1"/>
</dbReference>
<dbReference type="PROSITE" id="PS01278">
    <property type="entry name" value="MTTASE_RADICAL"/>
    <property type="match status" value="1"/>
</dbReference>
<dbReference type="PROSITE" id="PS51918">
    <property type="entry name" value="RADICAL_SAM"/>
    <property type="match status" value="1"/>
</dbReference>
<dbReference type="PROSITE" id="PS50926">
    <property type="entry name" value="TRAM"/>
    <property type="match status" value="1"/>
</dbReference>
<protein>
    <recommendedName>
        <fullName evidence="1">tRNA-2-methylthio-N(6)-dimethylallyladenosine synthase</fullName>
        <ecNumber evidence="1">2.8.4.3</ecNumber>
    </recommendedName>
    <alternativeName>
        <fullName evidence="1">(Dimethylallyl)adenosine tRNA methylthiotransferase MiaB</fullName>
    </alternativeName>
    <alternativeName>
        <fullName evidence="1">tRNA-i(6)A37 methylthiotransferase</fullName>
    </alternativeName>
</protein>
<comment type="function">
    <text evidence="1">Catalyzes the methylthiolation of N6-(dimethylallyl)adenosine (i(6)A), leading to the formation of 2-methylthio-N6-(dimethylallyl)adenosine (ms(2)i(6)A) at position 37 in tRNAs that read codons beginning with uridine.</text>
</comment>
<comment type="catalytic activity">
    <reaction evidence="1">
        <text>N(6)-dimethylallyladenosine(37) in tRNA + (sulfur carrier)-SH + AH2 + 2 S-adenosyl-L-methionine = 2-methylsulfanyl-N(6)-dimethylallyladenosine(37) in tRNA + (sulfur carrier)-H + 5'-deoxyadenosine + L-methionine + A + S-adenosyl-L-homocysteine + 2 H(+)</text>
        <dbReference type="Rhea" id="RHEA:37067"/>
        <dbReference type="Rhea" id="RHEA-COMP:10375"/>
        <dbReference type="Rhea" id="RHEA-COMP:10376"/>
        <dbReference type="Rhea" id="RHEA-COMP:14737"/>
        <dbReference type="Rhea" id="RHEA-COMP:14739"/>
        <dbReference type="ChEBI" id="CHEBI:13193"/>
        <dbReference type="ChEBI" id="CHEBI:15378"/>
        <dbReference type="ChEBI" id="CHEBI:17319"/>
        <dbReference type="ChEBI" id="CHEBI:17499"/>
        <dbReference type="ChEBI" id="CHEBI:29917"/>
        <dbReference type="ChEBI" id="CHEBI:57844"/>
        <dbReference type="ChEBI" id="CHEBI:57856"/>
        <dbReference type="ChEBI" id="CHEBI:59789"/>
        <dbReference type="ChEBI" id="CHEBI:64428"/>
        <dbReference type="ChEBI" id="CHEBI:74415"/>
        <dbReference type="ChEBI" id="CHEBI:74417"/>
        <dbReference type="EC" id="2.8.4.3"/>
    </reaction>
</comment>
<comment type="cofactor">
    <cofactor evidence="1">
        <name>[4Fe-4S] cluster</name>
        <dbReference type="ChEBI" id="CHEBI:49883"/>
    </cofactor>
    <text evidence="1">Binds 2 [4Fe-4S] clusters. One cluster is coordinated with 3 cysteines and an exchangeable S-adenosyl-L-methionine.</text>
</comment>
<comment type="subunit">
    <text evidence="1">Monomer.</text>
</comment>
<comment type="subcellular location">
    <subcellularLocation>
        <location evidence="1">Cytoplasm</location>
    </subcellularLocation>
</comment>
<comment type="similarity">
    <text evidence="1">Belongs to the methylthiotransferase family. MiaB subfamily.</text>
</comment>
<comment type="sequence caution" evidence="3">
    <conflict type="erroneous initiation">
        <sequence resource="EMBL-CDS" id="CAP43997"/>
    </conflict>
</comment>
<gene>
    <name evidence="1" type="primary">miaB</name>
    <name type="ordered locus">Bpet3654</name>
</gene>
<proteinExistence type="inferred from homology"/>
<organism>
    <name type="scientific">Bordetella petrii (strain ATCC BAA-461 / DSM 12804 / CCUG 43448)</name>
    <dbReference type="NCBI Taxonomy" id="340100"/>
    <lineage>
        <taxon>Bacteria</taxon>
        <taxon>Pseudomonadati</taxon>
        <taxon>Pseudomonadota</taxon>
        <taxon>Betaproteobacteria</taxon>
        <taxon>Burkholderiales</taxon>
        <taxon>Alcaligenaceae</taxon>
        <taxon>Bordetella</taxon>
    </lineage>
</organism>
<accession>A9HZZ2</accession>